<keyword id="KW-0002">3D-structure</keyword>
<keyword id="KW-0027">Amidation</keyword>
<keyword id="KW-0165">Cleavage on pair of basic residues</keyword>
<keyword id="KW-0903">Direct protein sequencing</keyword>
<keyword id="KW-0527">Neuropeptide</keyword>
<keyword id="KW-0964">Secreted</keyword>
<keyword id="KW-0732">Signal</keyword>
<organism>
    <name type="scientific">Diploptera punctata</name>
    <name type="common">Pacific beetle cockroach</name>
    <dbReference type="NCBI Taxonomy" id="6984"/>
    <lineage>
        <taxon>Eukaryota</taxon>
        <taxon>Metazoa</taxon>
        <taxon>Ecdysozoa</taxon>
        <taxon>Arthropoda</taxon>
        <taxon>Hexapoda</taxon>
        <taxon>Insecta</taxon>
        <taxon>Pterygota</taxon>
        <taxon>Neoptera</taxon>
        <taxon>Polyneoptera</taxon>
        <taxon>Dictyoptera</taxon>
        <taxon>Blattodea</taxon>
        <taxon>Blaberoidea</taxon>
        <taxon>Blaberidae</taxon>
        <taxon>Diplopterinae</taxon>
        <taxon>Diploptera</taxon>
    </lineage>
</organism>
<proteinExistence type="evidence at protein level"/>
<evidence type="ECO:0000255" key="1"/>
<evidence type="ECO:0000256" key="2">
    <source>
        <dbReference type="SAM" id="MobiDB-lite"/>
    </source>
</evidence>
<evidence type="ECO:0000269" key="3">
    <source>
    </source>
</evidence>
<evidence type="ECO:0000269" key="4">
    <source>
    </source>
</evidence>
<evidence type="ECO:0000269" key="5">
    <source>
    </source>
</evidence>
<evidence type="ECO:0000305" key="6"/>
<evidence type="ECO:0007829" key="7">
    <source>
        <dbReference type="PDB" id="2JQS"/>
    </source>
</evidence>
<evidence type="ECO:0007829" key="8">
    <source>
        <dbReference type="PDB" id="2JQU"/>
    </source>
</evidence>
<feature type="signal peptide" evidence="1">
    <location>
        <begin position="1"/>
        <end position="27"/>
    </location>
</feature>
<feature type="propeptide" id="PRO_0000001129">
    <location>
        <begin position="28"/>
        <end position="65"/>
    </location>
</feature>
<feature type="peptide" id="PRO_0000001130" description="Allatostatin-1">
    <location>
        <begin position="68"/>
        <end position="73"/>
    </location>
</feature>
<feature type="peptide" id="PRO_0000001131" description="Allatostatin-2">
    <location>
        <begin position="77"/>
        <end position="94"/>
    </location>
</feature>
<feature type="peptide" id="PRO_0000001132" description="Allatostatin-3">
    <location>
        <begin position="98"/>
        <end position="105"/>
    </location>
</feature>
<feature type="peptide" id="PRO_0000001133" description="Allatostatin-4">
    <location>
        <begin position="109"/>
        <end position="117"/>
    </location>
</feature>
<feature type="propeptide" id="PRO_0000001134">
    <location>
        <begin position="121"/>
        <end position="151"/>
    </location>
</feature>
<feature type="peptide" id="PRO_0000001135" description="Allatostatin-5">
    <location>
        <begin position="154"/>
        <end position="161"/>
    </location>
</feature>
<feature type="peptide" id="PRO_0000001136" description="Allatostatin-6">
    <location>
        <begin position="165"/>
        <end position="172"/>
    </location>
</feature>
<feature type="peptide" id="PRO_0000001137" description="Allatostatin-7">
    <location>
        <begin position="176"/>
        <end position="188"/>
    </location>
</feature>
<feature type="peptide" id="PRO_0000001138" description="Allatostatin-8">
    <location>
        <begin position="192"/>
        <end position="200"/>
    </location>
</feature>
<feature type="peptide" id="PRO_0000001139" description="Allatostatin-9">
    <location>
        <begin position="204"/>
        <end position="213"/>
    </location>
</feature>
<feature type="peptide" id="PRO_0000001140" description="Allatostatin-10">
    <location>
        <begin position="217"/>
        <end position="232"/>
    </location>
</feature>
<feature type="propeptide" id="PRO_0000001141">
    <location>
        <begin position="236"/>
        <end position="251"/>
    </location>
</feature>
<feature type="peptide" id="PRO_0000001142" description="Allatostatin-11">
    <location>
        <begin position="254"/>
        <end position="264"/>
    </location>
</feature>
<feature type="propeptide" id="PRO_0000001143">
    <location>
        <begin position="268"/>
        <end position="345"/>
    </location>
</feature>
<feature type="peptide" id="PRO_0000001144" description="Allatostatin-12">
    <location>
        <begin position="348"/>
        <end position="353"/>
    </location>
</feature>
<feature type="peptide" id="PRO_0000001145" description="Allatostatin-13">
    <location>
        <begin position="357"/>
        <end position="364"/>
    </location>
</feature>
<feature type="propeptide" id="PRO_0000001146">
    <location>
        <begin position="368"/>
        <end position="370"/>
    </location>
</feature>
<feature type="region of interest" description="Disordered" evidence="2">
    <location>
        <begin position="29"/>
        <end position="58"/>
    </location>
</feature>
<feature type="region of interest" description="Disordered" evidence="2">
    <location>
        <begin position="273"/>
        <end position="298"/>
    </location>
</feature>
<feature type="modified residue" description="Leucine amide" evidence="5">
    <location>
        <position position="73"/>
    </location>
</feature>
<feature type="modified residue" description="Leucine amide" evidence="5">
    <location>
        <position position="94"/>
    </location>
</feature>
<feature type="modified residue" description="Leucine amide" evidence="5">
    <location>
        <position position="105"/>
    </location>
</feature>
<feature type="modified residue" description="Leucine amide" evidence="5">
    <location>
        <position position="117"/>
    </location>
</feature>
<feature type="modified residue" description="Leucine amide" evidence="3 5">
    <location>
        <position position="161"/>
    </location>
</feature>
<feature type="modified residue" description="Leucine amide" evidence="5">
    <location>
        <position position="172"/>
    </location>
</feature>
<feature type="modified residue" description="Leucine amide" evidence="4 5">
    <location>
        <position position="188"/>
    </location>
</feature>
<feature type="modified residue" description="Leucine amide" evidence="3 5">
    <location>
        <position position="200"/>
    </location>
</feature>
<feature type="modified residue" description="Leucine amide" evidence="5">
    <location>
        <position position="213"/>
    </location>
</feature>
<feature type="modified residue" description="Leucine amide" evidence="5">
    <location>
        <position position="232"/>
    </location>
</feature>
<feature type="modified residue" description="Leucine amide" evidence="5">
    <location>
        <position position="264"/>
    </location>
</feature>
<feature type="modified residue" description="Leucine amide" evidence="5">
    <location>
        <position position="353"/>
    </location>
</feature>
<feature type="modified residue" description="Isoleucine amide" evidence="5">
    <location>
        <position position="364"/>
    </location>
</feature>
<feature type="helix" evidence="7">
    <location>
        <begin position="157"/>
        <end position="159"/>
    </location>
</feature>
<feature type="strand" evidence="8">
    <location>
        <begin position="194"/>
        <end position="198"/>
    </location>
</feature>
<dbReference type="EMBL" id="U00444">
    <property type="protein sequence ID" value="AAA18260.1"/>
    <property type="molecule type" value="mRNA"/>
</dbReference>
<dbReference type="EMBL" id="S74578">
    <property type="protein sequence ID" value="AAB32720.2"/>
    <property type="molecule type" value="mRNA"/>
</dbReference>
<dbReference type="PIR" id="A48252">
    <property type="entry name" value="A48252"/>
</dbReference>
<dbReference type="PDB" id="2JQS">
    <property type="method" value="NMR"/>
    <property type="chains" value="A=154-161"/>
</dbReference>
<dbReference type="PDB" id="2JQU">
    <property type="method" value="NMR"/>
    <property type="chains" value="A=192-200"/>
</dbReference>
<dbReference type="PDBsum" id="2JQS"/>
<dbReference type="PDBsum" id="2JQU"/>
<dbReference type="SMR" id="P12764"/>
<dbReference type="EvolutionaryTrace" id="P12764"/>
<dbReference type="GO" id="GO:0005576">
    <property type="term" value="C:extracellular region"/>
    <property type="evidence" value="ECO:0007669"/>
    <property type="project" value="UniProtKB-SubCell"/>
</dbReference>
<dbReference type="GO" id="GO:0005184">
    <property type="term" value="F:neuropeptide hormone activity"/>
    <property type="evidence" value="ECO:0007669"/>
    <property type="project" value="InterPro"/>
</dbReference>
<dbReference type="GO" id="GO:0007218">
    <property type="term" value="P:neuropeptide signaling pathway"/>
    <property type="evidence" value="ECO:0007669"/>
    <property type="project" value="UniProtKB-KW"/>
</dbReference>
<dbReference type="InterPro" id="IPR010276">
    <property type="entry name" value="Allatostatin"/>
</dbReference>
<dbReference type="Pfam" id="PF05953">
    <property type="entry name" value="Allatostatin"/>
    <property type="match status" value="5"/>
</dbReference>
<reference key="1">
    <citation type="journal article" date="1993" name="Proc. Natl. Acad. Sci. U.S.A.">
        <title>Molecular cloning of the gene for the allatostatin family of neuropeptides from the cockroach Diploptera punctata.</title>
        <authorList>
            <person name="Donly B.C."/>
            <person name="Ding Q."/>
            <person name="Tobe S.S."/>
            <person name="Bendena W.G."/>
        </authorList>
    </citation>
    <scope>NUCLEOTIDE SEQUENCE [MRNA]</scope>
    <scope>AMIDATION AT LEU-73; LEU-94; LEU-105; LEU-117; LEU-161; LEU-172; LEU-188; LEU-200; LEU-213; LEU-232; LEU-264; LEU-353 AND ILE-364</scope>
    <source>
        <tissue>Brain</tissue>
    </source>
</reference>
<reference key="2">
    <citation type="journal article" date="1989" name="Proc. Natl. Acad. Sci. U.S.A.">
        <title>Primary structure of four allatostatins: neuropeptide inhibitors of juvenile hormone synthesis.</title>
        <authorList>
            <person name="Woodhead A.P."/>
            <person name="Stay B."/>
            <person name="Seidel S.L."/>
            <person name="Khan M.A."/>
            <person name="Tobe S.S."/>
        </authorList>
    </citation>
    <scope>PROTEIN SEQUENCE OF 154-161; 176-188; 192-200 AND 204-213</scope>
    <source>
        <tissue>Brain</tissue>
    </source>
</reference>
<reference key="3">
    <citation type="journal article" date="1991" name="Proc. Natl. Acad. Sci. U.S.A.">
        <title>Identity of a second type of allatostatin from cockroach brains: an octadecapeptide amide with a tyrosine-rich address sequence.</title>
        <authorList>
            <person name="Pratt G.E."/>
            <person name="Farnsworth D.E."/>
            <person name="Fok K.F."/>
            <person name="Siegel N.R."/>
            <person name="McCormack A.L."/>
            <person name="Shabanowitz J."/>
            <person name="Hunt D.F."/>
            <person name="Feyereisen R."/>
        </authorList>
    </citation>
    <scope>PROTEIN SEQUENCE OF 77-94</scope>
    <source>
        <tissue>Brain</tissue>
    </source>
</reference>
<reference key="4">
    <citation type="journal article" date="1994" name="Proc. Natl. Acad. Sci. U.S.A.">
        <title>Expression of the allatostatin gene in endocrine cells of the cockroach midgut.</title>
        <authorList>
            <person name="Reichwald K."/>
            <person name="Unnithan G.C."/>
            <person name="Davis N.T."/>
            <person name="Agricola H."/>
            <person name="Feyereisen R."/>
        </authorList>
    </citation>
    <scope>NUCLEOTIDE SEQUENCE [MRNA] OF 77-189</scope>
</reference>
<reference key="5">
    <citation type="journal article" date="1989" name="Biochem. Biophys. Res. Commun.">
        <title>Identification of an allatostatin from adult Diploptera punctata.</title>
        <authorList>
            <person name="Pratt G.E."/>
            <person name="Farnsworth D.E."/>
            <person name="Siegel N.R."/>
            <person name="Fok K.F."/>
            <person name="Feyereisen R."/>
        </authorList>
    </citation>
    <scope>PROTEIN SEQUENCE OF 176-188 (AST7)</scope>
    <scope>AMIDATION AT LEU-188</scope>
    <source>
        <tissue>Brain</tissue>
    </source>
</reference>
<reference key="6">
    <citation type="journal article" date="2008" name="Peptides">
        <title>Probing the conformation and dynamics of allatostatin neuropeptides: a structural model for functional differences.</title>
        <authorList>
            <person name="Banerjee M."/>
            <person name="Meyerowitz E."/>
            <person name="Huang C."/>
            <person name="Mohanty S."/>
        </authorList>
    </citation>
    <scope>STRUCTURE BY NMR OF 154-161 AND 192-200</scope>
    <scope>FUNCTION</scope>
    <scope>AMIDATION AT LEU-161 AND LEU-200</scope>
</reference>
<name>ALLS_DIPPU</name>
<sequence length="370" mass="41562">MSGPRTCFCLPSALVLVLLSLSTSALGTAPEPSGVHEESPAGGGTDLLPHPEDLSASDNPDLEFVKRLYDFGLGKRAYSYVSEYKRLPVYNFGLGKRSKMYGFGLGKRDGRMYSFGLGKRDYDYYGEEDEDDQQAIGDEDIEESDVGDLMDKRDRLYSFGLGKRARPYSFGLGKRAPSGAQRLYGFGLGKRGGSLYSFGLGKRGDGRLYAFGLGKRPVNSGRSSGSRFNFGLGKRSDDIDFRELEEKFAEDKRYPQEHRFSFGLGKREVEPSELEAVRNEEKDNSSVHDKKNNTNDMHSGERIKRSLHYPFGIRKLESSYDLNSASSLNSEENDDITPEEFSRMVRRPFNFGLGKRIPMYDFGIGKRSER</sequence>
<comment type="function">
    <text evidence="3">Neuropeptide inhibitors of juvenile hormone synthesis and gut muscle contraction.</text>
</comment>
<comment type="subcellular location">
    <subcellularLocation>
        <location>Secreted</location>
    </subcellularLocation>
</comment>
<comment type="tissue specificity">
    <text>Brain, subesophageal ganglion and corpus allatum.</text>
</comment>
<comment type="similarity">
    <text evidence="6">Belongs to the allatostatin family.</text>
</comment>
<accession>P12764</accession>
<accession>P12765</accession>
<accession>P12766</accession>
<accession>P12767</accession>
<accession>P22410</accession>
<protein>
    <recommendedName>
        <fullName>Allatostatins</fullName>
    </recommendedName>
    <component>
        <recommendedName>
            <fullName>Allatostatin-1</fullName>
            <shortName>AST1</shortName>
        </recommendedName>
    </component>
    <component>
        <recommendedName>
            <fullName>Allatostatin-2</fullName>
            <shortName>AST2</shortName>
        </recommendedName>
        <alternativeName>
            <fullName>ASA5</fullName>
        </alternativeName>
        <alternativeName>
            <fullName>ASB2</fullName>
        </alternativeName>
    </component>
    <component>
        <recommendedName>
            <fullName>Allatostatin-3</fullName>
            <shortName>AST3</shortName>
        </recommendedName>
    </component>
    <component>
        <recommendedName>
            <fullName>Allatostatin-4</fullName>
            <shortName>AST4</shortName>
        </recommendedName>
        <alternativeName>
            <fullName>ASA7</fullName>
        </alternativeName>
    </component>
    <component>
        <recommendedName>
            <fullName>Allatostatin-5</fullName>
            <shortName>AST5</shortName>
        </recommendedName>
        <alternativeName>
            <fullName>ASA4</fullName>
        </alternativeName>
    </component>
    <component>
        <recommendedName>
            <fullName>Allatostatin-6</fullName>
            <shortName>AST6</shortName>
        </recommendedName>
    </component>
    <component>
        <recommendedName>
            <fullName>Allatostatin-7</fullName>
            <shortName>AST7</shortName>
        </recommendedName>
        <alternativeName>
            <fullName>ASA1</fullName>
        </alternativeName>
    </component>
    <component>
        <recommendedName>
            <fullName>Allatostatin-8</fullName>
            <shortName>AST8</shortName>
        </recommendedName>
        <alternativeName>
            <fullName>ASA3</fullName>
        </alternativeName>
    </component>
    <component>
        <recommendedName>
            <fullName>Allatostatin-9</fullName>
            <shortName>AST9</shortName>
        </recommendedName>
        <alternativeName>
            <fullName>ASA2</fullName>
        </alternativeName>
    </component>
    <component>
        <recommendedName>
            <fullName>Allatostatin-10</fullName>
            <shortName>AST10</shortName>
        </recommendedName>
    </component>
    <component>
        <recommendedName>
            <fullName>Allatostatin-11</fullName>
            <shortName>AST11</shortName>
        </recommendedName>
        <alternativeName>
            <fullName>ASA6</fullName>
        </alternativeName>
    </component>
    <component>
        <recommendedName>
            <fullName>Allatostatin-12</fullName>
            <shortName>AST12</shortName>
        </recommendedName>
    </component>
    <component>
        <recommendedName>
            <fullName>Allatostatin-13</fullName>
            <shortName>AST13</shortName>
        </recommendedName>
    </component>
</protein>